<evidence type="ECO:0000255" key="1">
    <source>
        <dbReference type="HAMAP-Rule" id="MF_00581"/>
    </source>
</evidence>
<gene>
    <name evidence="1" type="primary">argG</name>
    <name type="ordered locus">ACP_3096</name>
</gene>
<name>ASSY_ACIC5</name>
<proteinExistence type="inferred from homology"/>
<keyword id="KW-0028">Amino-acid biosynthesis</keyword>
<keyword id="KW-0055">Arginine biosynthesis</keyword>
<keyword id="KW-0067">ATP-binding</keyword>
<keyword id="KW-0963">Cytoplasm</keyword>
<keyword id="KW-0436">Ligase</keyword>
<keyword id="KW-0547">Nucleotide-binding</keyword>
<keyword id="KW-1185">Reference proteome</keyword>
<sequence length="445" mass="49594">MSVILEHLPTGQKVGIAFSGGLDTSAALHWMKQKGALPYAYTANLGQPDETDYEAIPRKALEYGAEIARLIDCREPLVREGIAALQSGAFHITTAGVTYFNTTPIGRAVTGTMLVTAMKEDDVNIWGDGSTFKGNDIERFYRYGLLVNPDLKVYKPWLDSAFIDELGGRAEMSEFLQKSGFDYKMSAEKAYSTDSNILGATHEAKDLELLSSSIRIVQPIMGVAFWRDDVAVKAEEVTVRFEEGFPVALNGTTYADPVELMLEANRIGGRHGLGMSDQIENRIIEAKSRGIYEAPGMALLFAAYERLITGIHNEDTIEQYHENGRKLGRLLYQGRWFDSQAIMLRESAQRWVARPITGEVTLELRRGNDYSILNTDSPNLTFKPERLTMEKGESTFSPRDRIGQLTMRNLDITDTREKLLTYAKSGLITLSHGSELPKLNSGEKN</sequence>
<reference key="1">
    <citation type="journal article" date="2009" name="Appl. Environ. Microbiol.">
        <title>Three genomes from the phylum Acidobacteria provide insight into the lifestyles of these microorganisms in soils.</title>
        <authorList>
            <person name="Ward N.L."/>
            <person name="Challacombe J.F."/>
            <person name="Janssen P.H."/>
            <person name="Henrissat B."/>
            <person name="Coutinho P.M."/>
            <person name="Wu M."/>
            <person name="Xie G."/>
            <person name="Haft D.H."/>
            <person name="Sait M."/>
            <person name="Badger J."/>
            <person name="Barabote R.D."/>
            <person name="Bradley B."/>
            <person name="Brettin T.S."/>
            <person name="Brinkac L.M."/>
            <person name="Bruce D."/>
            <person name="Creasy T."/>
            <person name="Daugherty S.C."/>
            <person name="Davidsen T.M."/>
            <person name="DeBoy R.T."/>
            <person name="Detter J.C."/>
            <person name="Dodson R.J."/>
            <person name="Durkin A.S."/>
            <person name="Ganapathy A."/>
            <person name="Gwinn-Giglio M."/>
            <person name="Han C.S."/>
            <person name="Khouri H."/>
            <person name="Kiss H."/>
            <person name="Kothari S.P."/>
            <person name="Madupu R."/>
            <person name="Nelson K.E."/>
            <person name="Nelson W.C."/>
            <person name="Paulsen I."/>
            <person name="Penn K."/>
            <person name="Ren Q."/>
            <person name="Rosovitz M.J."/>
            <person name="Selengut J.D."/>
            <person name="Shrivastava S."/>
            <person name="Sullivan S.A."/>
            <person name="Tapia R."/>
            <person name="Thompson L.S."/>
            <person name="Watkins K.L."/>
            <person name="Yang Q."/>
            <person name="Yu C."/>
            <person name="Zafar N."/>
            <person name="Zhou L."/>
            <person name="Kuske C.R."/>
        </authorList>
    </citation>
    <scope>NUCLEOTIDE SEQUENCE [LARGE SCALE GENOMIC DNA]</scope>
    <source>
        <strain>ATCC 51196 / DSM 11244 / BCRC 80197 / JCM 7670 / NBRC 15755 / NCIMB 13165 / 161</strain>
    </source>
</reference>
<feature type="chain" id="PRO_1000146927" description="Argininosuccinate synthase">
    <location>
        <begin position="1"/>
        <end position="445"/>
    </location>
</feature>
<feature type="binding site" evidence="1">
    <location>
        <begin position="17"/>
        <end position="25"/>
    </location>
    <ligand>
        <name>ATP</name>
        <dbReference type="ChEBI" id="CHEBI:30616"/>
    </ligand>
</feature>
<feature type="binding site" evidence="1">
    <location>
        <position position="43"/>
    </location>
    <ligand>
        <name>ATP</name>
        <dbReference type="ChEBI" id="CHEBI:30616"/>
    </ligand>
</feature>
<feature type="binding site" evidence="1">
    <location>
        <position position="99"/>
    </location>
    <ligand>
        <name>L-citrulline</name>
        <dbReference type="ChEBI" id="CHEBI:57743"/>
    </ligand>
</feature>
<feature type="binding site" evidence="1">
    <location>
        <position position="129"/>
    </location>
    <ligand>
        <name>ATP</name>
        <dbReference type="ChEBI" id="CHEBI:30616"/>
    </ligand>
</feature>
<feature type="binding site" evidence="1">
    <location>
        <position position="131"/>
    </location>
    <ligand>
        <name>ATP</name>
        <dbReference type="ChEBI" id="CHEBI:30616"/>
    </ligand>
</feature>
<feature type="binding site" evidence="1">
    <location>
        <position position="131"/>
    </location>
    <ligand>
        <name>L-aspartate</name>
        <dbReference type="ChEBI" id="CHEBI:29991"/>
    </ligand>
</feature>
<feature type="binding site" evidence="1">
    <location>
        <position position="135"/>
    </location>
    <ligand>
        <name>L-aspartate</name>
        <dbReference type="ChEBI" id="CHEBI:29991"/>
    </ligand>
</feature>
<feature type="binding site" evidence="1">
    <location>
        <position position="135"/>
    </location>
    <ligand>
        <name>L-citrulline</name>
        <dbReference type="ChEBI" id="CHEBI:57743"/>
    </ligand>
</feature>
<feature type="binding site" evidence="1">
    <location>
        <position position="136"/>
    </location>
    <ligand>
        <name>ATP</name>
        <dbReference type="ChEBI" id="CHEBI:30616"/>
    </ligand>
</feature>
<feature type="binding site" evidence="1">
    <location>
        <position position="136"/>
    </location>
    <ligand>
        <name>L-aspartate</name>
        <dbReference type="ChEBI" id="CHEBI:29991"/>
    </ligand>
</feature>
<feature type="binding site" evidence="1">
    <location>
        <position position="139"/>
    </location>
    <ligand>
        <name>L-citrulline</name>
        <dbReference type="ChEBI" id="CHEBI:57743"/>
    </ligand>
</feature>
<feature type="binding site" evidence="1">
    <location>
        <position position="192"/>
    </location>
    <ligand>
        <name>L-citrulline</name>
        <dbReference type="ChEBI" id="CHEBI:57743"/>
    </ligand>
</feature>
<feature type="binding site" evidence="1">
    <location>
        <position position="194"/>
    </location>
    <ligand>
        <name>ATP</name>
        <dbReference type="ChEBI" id="CHEBI:30616"/>
    </ligand>
</feature>
<feature type="binding site" evidence="1">
    <location>
        <position position="201"/>
    </location>
    <ligand>
        <name>L-citrulline</name>
        <dbReference type="ChEBI" id="CHEBI:57743"/>
    </ligand>
</feature>
<feature type="binding site" evidence="1">
    <location>
        <position position="203"/>
    </location>
    <ligand>
        <name>L-citrulline</name>
        <dbReference type="ChEBI" id="CHEBI:57743"/>
    </ligand>
</feature>
<feature type="binding site" evidence="1">
    <location>
        <position position="280"/>
    </location>
    <ligand>
        <name>L-citrulline</name>
        <dbReference type="ChEBI" id="CHEBI:57743"/>
    </ligand>
</feature>
<organism>
    <name type="scientific">Acidobacterium capsulatum (strain ATCC 51196 / DSM 11244 / BCRC 80197 / JCM 7670 / NBRC 15755 / NCIMB 13165 / 161)</name>
    <dbReference type="NCBI Taxonomy" id="240015"/>
    <lineage>
        <taxon>Bacteria</taxon>
        <taxon>Pseudomonadati</taxon>
        <taxon>Acidobacteriota</taxon>
        <taxon>Terriglobia</taxon>
        <taxon>Terriglobales</taxon>
        <taxon>Acidobacteriaceae</taxon>
        <taxon>Acidobacterium</taxon>
    </lineage>
</organism>
<dbReference type="EC" id="6.3.4.5" evidence="1"/>
<dbReference type="EMBL" id="CP001472">
    <property type="protein sequence ID" value="ACO33563.1"/>
    <property type="molecule type" value="Genomic_DNA"/>
</dbReference>
<dbReference type="RefSeq" id="WP_015898144.1">
    <property type="nucleotide sequence ID" value="NC_012483.1"/>
</dbReference>
<dbReference type="SMR" id="C1F510"/>
<dbReference type="FunCoup" id="C1F510">
    <property type="interactions" value="484"/>
</dbReference>
<dbReference type="STRING" id="240015.ACP_3096"/>
<dbReference type="KEGG" id="aca:ACP_3096"/>
<dbReference type="eggNOG" id="COG0137">
    <property type="taxonomic scope" value="Bacteria"/>
</dbReference>
<dbReference type="HOGENOM" id="CLU_032784_4_1_0"/>
<dbReference type="InParanoid" id="C1F510"/>
<dbReference type="OrthoDB" id="9801641at2"/>
<dbReference type="UniPathway" id="UPA00068">
    <property type="reaction ID" value="UER00113"/>
</dbReference>
<dbReference type="Proteomes" id="UP000002207">
    <property type="component" value="Chromosome"/>
</dbReference>
<dbReference type="GO" id="GO:0005737">
    <property type="term" value="C:cytoplasm"/>
    <property type="evidence" value="ECO:0007669"/>
    <property type="project" value="UniProtKB-SubCell"/>
</dbReference>
<dbReference type="GO" id="GO:0004055">
    <property type="term" value="F:argininosuccinate synthase activity"/>
    <property type="evidence" value="ECO:0007669"/>
    <property type="project" value="UniProtKB-UniRule"/>
</dbReference>
<dbReference type="GO" id="GO:0005524">
    <property type="term" value="F:ATP binding"/>
    <property type="evidence" value="ECO:0007669"/>
    <property type="project" value="UniProtKB-UniRule"/>
</dbReference>
<dbReference type="GO" id="GO:0042803">
    <property type="term" value="F:protein homodimerization activity"/>
    <property type="evidence" value="ECO:0007669"/>
    <property type="project" value="InterPro"/>
</dbReference>
<dbReference type="GO" id="GO:0000053">
    <property type="term" value="P:argininosuccinate metabolic process"/>
    <property type="evidence" value="ECO:0007669"/>
    <property type="project" value="TreeGrafter"/>
</dbReference>
<dbReference type="GO" id="GO:0006526">
    <property type="term" value="P:L-arginine biosynthetic process"/>
    <property type="evidence" value="ECO:0007669"/>
    <property type="project" value="UniProtKB-UniRule"/>
</dbReference>
<dbReference type="GO" id="GO:0000050">
    <property type="term" value="P:urea cycle"/>
    <property type="evidence" value="ECO:0007669"/>
    <property type="project" value="TreeGrafter"/>
</dbReference>
<dbReference type="CDD" id="cd01999">
    <property type="entry name" value="ASS"/>
    <property type="match status" value="1"/>
</dbReference>
<dbReference type="FunFam" id="1.10.287.400:FF:000001">
    <property type="entry name" value="Argininosuccinate synthase"/>
    <property type="match status" value="1"/>
</dbReference>
<dbReference type="Gene3D" id="1.10.287.400">
    <property type="match status" value="1"/>
</dbReference>
<dbReference type="Gene3D" id="3.90.1260.10">
    <property type="entry name" value="Argininosuccinate synthetase, chain A, domain 2"/>
    <property type="match status" value="1"/>
</dbReference>
<dbReference type="Gene3D" id="3.40.50.620">
    <property type="entry name" value="HUPs"/>
    <property type="match status" value="1"/>
</dbReference>
<dbReference type="HAMAP" id="MF_00581">
    <property type="entry name" value="Arg_succ_synth_type2"/>
    <property type="match status" value="1"/>
</dbReference>
<dbReference type="InterPro" id="IPR023437">
    <property type="entry name" value="Arg_succ_synth_type2_subfam"/>
</dbReference>
<dbReference type="InterPro" id="IPR048268">
    <property type="entry name" value="Arginosuc_syn_C"/>
</dbReference>
<dbReference type="InterPro" id="IPR048267">
    <property type="entry name" value="Arginosuc_syn_N"/>
</dbReference>
<dbReference type="InterPro" id="IPR001518">
    <property type="entry name" value="Arginosuc_synth"/>
</dbReference>
<dbReference type="InterPro" id="IPR018223">
    <property type="entry name" value="Arginosuc_synth_CS"/>
</dbReference>
<dbReference type="InterPro" id="IPR023434">
    <property type="entry name" value="Arginosuc_synth_type_1_subfam"/>
</dbReference>
<dbReference type="InterPro" id="IPR024074">
    <property type="entry name" value="AS_cat/multimer_dom_body"/>
</dbReference>
<dbReference type="InterPro" id="IPR024073">
    <property type="entry name" value="AS_multimer_C_tail"/>
</dbReference>
<dbReference type="InterPro" id="IPR014729">
    <property type="entry name" value="Rossmann-like_a/b/a_fold"/>
</dbReference>
<dbReference type="NCBIfam" id="TIGR00032">
    <property type="entry name" value="argG"/>
    <property type="match status" value="1"/>
</dbReference>
<dbReference type="NCBIfam" id="NF003779">
    <property type="entry name" value="PRK05370.1"/>
    <property type="match status" value="1"/>
</dbReference>
<dbReference type="PANTHER" id="PTHR11587">
    <property type="entry name" value="ARGININOSUCCINATE SYNTHASE"/>
    <property type="match status" value="1"/>
</dbReference>
<dbReference type="PANTHER" id="PTHR11587:SF2">
    <property type="entry name" value="ARGININOSUCCINATE SYNTHASE"/>
    <property type="match status" value="1"/>
</dbReference>
<dbReference type="Pfam" id="PF20979">
    <property type="entry name" value="Arginosuc_syn_C"/>
    <property type="match status" value="1"/>
</dbReference>
<dbReference type="Pfam" id="PF00764">
    <property type="entry name" value="Arginosuc_synth"/>
    <property type="match status" value="1"/>
</dbReference>
<dbReference type="SUPFAM" id="SSF52402">
    <property type="entry name" value="Adenine nucleotide alpha hydrolases-like"/>
    <property type="match status" value="1"/>
</dbReference>
<dbReference type="SUPFAM" id="SSF69864">
    <property type="entry name" value="Argininosuccinate synthetase, C-terminal domain"/>
    <property type="match status" value="1"/>
</dbReference>
<dbReference type="PROSITE" id="PS00564">
    <property type="entry name" value="ARGININOSUCCIN_SYN_1"/>
    <property type="match status" value="1"/>
</dbReference>
<dbReference type="PROSITE" id="PS00565">
    <property type="entry name" value="ARGININOSUCCIN_SYN_2"/>
    <property type="match status" value="1"/>
</dbReference>
<protein>
    <recommendedName>
        <fullName evidence="1">Argininosuccinate synthase</fullName>
        <ecNumber evidence="1">6.3.4.5</ecNumber>
    </recommendedName>
    <alternativeName>
        <fullName evidence="1">Citrulline--aspartate ligase</fullName>
    </alternativeName>
</protein>
<accession>C1F510</accession>
<comment type="catalytic activity">
    <reaction evidence="1">
        <text>L-citrulline + L-aspartate + ATP = 2-(N(omega)-L-arginino)succinate + AMP + diphosphate + H(+)</text>
        <dbReference type="Rhea" id="RHEA:10932"/>
        <dbReference type="ChEBI" id="CHEBI:15378"/>
        <dbReference type="ChEBI" id="CHEBI:29991"/>
        <dbReference type="ChEBI" id="CHEBI:30616"/>
        <dbReference type="ChEBI" id="CHEBI:33019"/>
        <dbReference type="ChEBI" id="CHEBI:57472"/>
        <dbReference type="ChEBI" id="CHEBI:57743"/>
        <dbReference type="ChEBI" id="CHEBI:456215"/>
        <dbReference type="EC" id="6.3.4.5"/>
    </reaction>
</comment>
<comment type="pathway">
    <text evidence="1">Amino-acid biosynthesis; L-arginine biosynthesis; L-arginine from L-ornithine and carbamoyl phosphate: step 2/3.</text>
</comment>
<comment type="subunit">
    <text evidence="1">Homotetramer.</text>
</comment>
<comment type="subcellular location">
    <subcellularLocation>
        <location evidence="1">Cytoplasm</location>
    </subcellularLocation>
</comment>
<comment type="similarity">
    <text evidence="1">Belongs to the argininosuccinate synthase family. Type 2 subfamily.</text>
</comment>